<evidence type="ECO:0000255" key="1">
    <source>
        <dbReference type="HAMAP-Rule" id="MF_01102"/>
    </source>
</evidence>
<name>MNMC_BORBR</name>
<keyword id="KW-0963">Cytoplasm</keyword>
<keyword id="KW-0274">FAD</keyword>
<keyword id="KW-0285">Flavoprotein</keyword>
<keyword id="KW-0489">Methyltransferase</keyword>
<keyword id="KW-0511">Multifunctional enzyme</keyword>
<keyword id="KW-0560">Oxidoreductase</keyword>
<keyword id="KW-0949">S-adenosyl-L-methionine</keyword>
<keyword id="KW-0808">Transferase</keyword>
<keyword id="KW-0819">tRNA processing</keyword>
<accession>Q7WFU7</accession>
<feature type="chain" id="PRO_0000347944" description="tRNA 5-methylaminomethyl-2-thiouridine biosynthesis bifunctional protein MnmC">
    <location>
        <begin position="1"/>
        <end position="632"/>
    </location>
</feature>
<feature type="region of interest" description="tRNA (mnm(5)s(2)U34)-methyltransferase">
    <location>
        <begin position="1"/>
        <end position="247"/>
    </location>
</feature>
<feature type="region of interest" description="FAD-dependent cmnm(5)s(2)U34 oxidoreductase">
    <location>
        <begin position="267"/>
        <end position="632"/>
    </location>
</feature>
<dbReference type="EC" id="2.1.1.61" evidence="1"/>
<dbReference type="EC" id="1.5.-.-" evidence="1"/>
<dbReference type="EMBL" id="BX640449">
    <property type="protein sequence ID" value="CAE34537.1"/>
    <property type="molecule type" value="Genomic_DNA"/>
</dbReference>
<dbReference type="RefSeq" id="WP_003814548.1">
    <property type="nucleotide sequence ID" value="NC_002927.3"/>
</dbReference>
<dbReference type="SMR" id="Q7WFU7"/>
<dbReference type="KEGG" id="bbr:BB4173"/>
<dbReference type="eggNOG" id="COG0665">
    <property type="taxonomic scope" value="Bacteria"/>
</dbReference>
<dbReference type="eggNOG" id="COG4121">
    <property type="taxonomic scope" value="Bacteria"/>
</dbReference>
<dbReference type="HOGENOM" id="CLU_022427_1_0_4"/>
<dbReference type="Proteomes" id="UP000001027">
    <property type="component" value="Chromosome"/>
</dbReference>
<dbReference type="GO" id="GO:0005737">
    <property type="term" value="C:cytoplasm"/>
    <property type="evidence" value="ECO:0007669"/>
    <property type="project" value="UniProtKB-SubCell"/>
</dbReference>
<dbReference type="GO" id="GO:0050660">
    <property type="term" value="F:flavin adenine dinucleotide binding"/>
    <property type="evidence" value="ECO:0007669"/>
    <property type="project" value="UniProtKB-UniRule"/>
</dbReference>
<dbReference type="GO" id="GO:0016645">
    <property type="term" value="F:oxidoreductase activity, acting on the CH-NH group of donors"/>
    <property type="evidence" value="ECO:0007669"/>
    <property type="project" value="InterPro"/>
</dbReference>
<dbReference type="GO" id="GO:0004808">
    <property type="term" value="F:tRNA (5-methylaminomethyl-2-thiouridylate)(34)-methyltransferase activity"/>
    <property type="evidence" value="ECO:0007669"/>
    <property type="project" value="UniProtKB-EC"/>
</dbReference>
<dbReference type="GO" id="GO:0032259">
    <property type="term" value="P:methylation"/>
    <property type="evidence" value="ECO:0007669"/>
    <property type="project" value="UniProtKB-KW"/>
</dbReference>
<dbReference type="GO" id="GO:0002097">
    <property type="term" value="P:tRNA wobble base modification"/>
    <property type="evidence" value="ECO:0007669"/>
    <property type="project" value="UniProtKB-UniRule"/>
</dbReference>
<dbReference type="Gene3D" id="3.30.9.10">
    <property type="entry name" value="D-Amino Acid Oxidase, subunit A, domain 2"/>
    <property type="match status" value="1"/>
</dbReference>
<dbReference type="Gene3D" id="3.50.50.60">
    <property type="entry name" value="FAD/NAD(P)-binding domain"/>
    <property type="match status" value="1"/>
</dbReference>
<dbReference type="Gene3D" id="3.40.50.150">
    <property type="entry name" value="Vaccinia Virus protein VP39"/>
    <property type="match status" value="1"/>
</dbReference>
<dbReference type="HAMAP" id="MF_01102">
    <property type="entry name" value="MnmC"/>
    <property type="match status" value="1"/>
</dbReference>
<dbReference type="InterPro" id="IPR006076">
    <property type="entry name" value="FAD-dep_OxRdtase"/>
</dbReference>
<dbReference type="InterPro" id="IPR036188">
    <property type="entry name" value="FAD/NAD-bd_sf"/>
</dbReference>
<dbReference type="InterPro" id="IPR008471">
    <property type="entry name" value="MnmC-like_methylTransf"/>
</dbReference>
<dbReference type="InterPro" id="IPR029063">
    <property type="entry name" value="SAM-dependent_MTases_sf"/>
</dbReference>
<dbReference type="InterPro" id="IPR023032">
    <property type="entry name" value="tRNA_MAMT_biosynth_bifunc_MnmC"/>
</dbReference>
<dbReference type="InterPro" id="IPR047785">
    <property type="entry name" value="tRNA_MNMC2"/>
</dbReference>
<dbReference type="InterPro" id="IPR017610">
    <property type="entry name" value="tRNA_S-uridine_synth_MnmC_C"/>
</dbReference>
<dbReference type="NCBIfam" id="TIGR03197">
    <property type="entry name" value="MnmC_Cterm"/>
    <property type="match status" value="1"/>
</dbReference>
<dbReference type="NCBIfam" id="NF033855">
    <property type="entry name" value="tRNA_MNMC2"/>
    <property type="match status" value="1"/>
</dbReference>
<dbReference type="PANTHER" id="PTHR13847">
    <property type="entry name" value="SARCOSINE DEHYDROGENASE-RELATED"/>
    <property type="match status" value="1"/>
</dbReference>
<dbReference type="PANTHER" id="PTHR13847:SF283">
    <property type="entry name" value="TRNA 5-METHYLAMINOMETHYL-2-THIOURIDINE BIOSYNTHESIS BIFUNCTIONAL PROTEIN MNMC"/>
    <property type="match status" value="1"/>
</dbReference>
<dbReference type="Pfam" id="PF01266">
    <property type="entry name" value="DAO"/>
    <property type="match status" value="1"/>
</dbReference>
<dbReference type="Pfam" id="PF05430">
    <property type="entry name" value="Methyltransf_30"/>
    <property type="match status" value="1"/>
</dbReference>
<dbReference type="SUPFAM" id="SSF51905">
    <property type="entry name" value="FAD/NAD(P)-binding domain"/>
    <property type="match status" value="1"/>
</dbReference>
<protein>
    <recommendedName>
        <fullName evidence="1">tRNA 5-methylaminomethyl-2-thiouridine biosynthesis bifunctional protein MnmC</fullName>
        <shortName evidence="1">tRNA mnm(5)s(2)U biosynthesis bifunctional protein</shortName>
    </recommendedName>
    <domain>
        <recommendedName>
            <fullName evidence="1">tRNA (mnm(5)s(2)U34)-methyltransferase</fullName>
            <ecNumber evidence="1">2.1.1.61</ecNumber>
        </recommendedName>
    </domain>
    <domain>
        <recommendedName>
            <fullName evidence="1">FAD-dependent cmnm(5)s(2)U34 oxidoreductase</fullName>
            <ecNumber evidence="1">1.5.-.-</ecNumber>
        </recommendedName>
    </domain>
</protein>
<sequence length="632" mass="66129">MNSRIFPAAMSAPYAPLQPAVVVHDEQGRLYSAAYGDVYHSRDDAAGQAEHVFLRGNGLPQRWRGRARFTVCETGFGMGLNFLTLWQAWRDDPARPRRLHMLSLEGHPFAREDLLAVLRAHAPAGLQALATQLAAQWPPLLPGLHRLEFEGGALTLTLGFGAAQQLAPRLTARVDAYFLDGFAPRGNPAMWDPHMLQALARLAAPDATLASWCSAGQVRQALQQAGFAVRRAPGFGGKWHMTLGQRLPGVATPDDAPDDDGAPVLVVGAGLAGAAVAHALALRGRAVTVLDAARLAGLASHAGHAAAALTPVIARDDNPRARLSRAGSQRAWLRWRDLPAPAAPRRCGTVQLERDAGRAAALAQTLQILQFPADWVRMVDRDQAGALAGLPVARGGVFFADGMLVRPGALIDALLAGEGISTIAAQAARLRRHGAQWQVLDAQGRQVAQAPVVVLANAADAPRLLADSGLLEPLPRLARMHALAGEVTLLPAEALSGGPRCVVGGEGYLLPAVDGWCVAGSTYVHGAAQALTGAEGQRVNLDKAAGLLGQAPAAFASLQPGSLPGWAGWRAVLPGRLPAAGPLAHAPGLWLAAGYASRGLSWAALMGDVIAARLCGEPGPLETDLLAQIAPR</sequence>
<gene>
    <name evidence="1" type="primary">mnmC</name>
    <name type="ordered locus">BB4173</name>
</gene>
<comment type="function">
    <text evidence="1">Catalyzes the last two steps in the biosynthesis of 5-methylaminomethyl-2-thiouridine (mnm(5)s(2)U) at the wobble position (U34) in tRNA. Catalyzes the FAD-dependent demodification of cmnm(5)s(2)U34 to nm(5)s(2)U34, followed by the transfer of a methyl group from S-adenosyl-L-methionine to nm(5)s(2)U34, to form mnm(5)s(2)U34.</text>
</comment>
<comment type="catalytic activity">
    <reaction evidence="1">
        <text>5-aminomethyl-2-thiouridine(34) in tRNA + S-adenosyl-L-methionine = 5-methylaminomethyl-2-thiouridine(34) in tRNA + S-adenosyl-L-homocysteine + H(+)</text>
        <dbReference type="Rhea" id="RHEA:19569"/>
        <dbReference type="Rhea" id="RHEA-COMP:10195"/>
        <dbReference type="Rhea" id="RHEA-COMP:10197"/>
        <dbReference type="ChEBI" id="CHEBI:15378"/>
        <dbReference type="ChEBI" id="CHEBI:57856"/>
        <dbReference type="ChEBI" id="CHEBI:59789"/>
        <dbReference type="ChEBI" id="CHEBI:74454"/>
        <dbReference type="ChEBI" id="CHEBI:74455"/>
        <dbReference type="EC" id="2.1.1.61"/>
    </reaction>
</comment>
<comment type="cofactor">
    <cofactor evidence="1">
        <name>FAD</name>
        <dbReference type="ChEBI" id="CHEBI:57692"/>
    </cofactor>
</comment>
<comment type="subcellular location">
    <subcellularLocation>
        <location evidence="1">Cytoplasm</location>
    </subcellularLocation>
</comment>
<comment type="similarity">
    <text evidence="1">In the N-terminal section; belongs to the methyltransferase superfamily. tRNA (mnm(5)s(2)U34)-methyltransferase family.</text>
</comment>
<comment type="similarity">
    <text evidence="1">In the C-terminal section; belongs to the DAO family.</text>
</comment>
<proteinExistence type="inferred from homology"/>
<reference key="1">
    <citation type="journal article" date="2003" name="Nat. Genet.">
        <title>Comparative analysis of the genome sequences of Bordetella pertussis, Bordetella parapertussis and Bordetella bronchiseptica.</title>
        <authorList>
            <person name="Parkhill J."/>
            <person name="Sebaihia M."/>
            <person name="Preston A."/>
            <person name="Murphy L.D."/>
            <person name="Thomson N.R."/>
            <person name="Harris D.E."/>
            <person name="Holden M.T.G."/>
            <person name="Churcher C.M."/>
            <person name="Bentley S.D."/>
            <person name="Mungall K.L."/>
            <person name="Cerdeno-Tarraga A.-M."/>
            <person name="Temple L."/>
            <person name="James K.D."/>
            <person name="Harris B."/>
            <person name="Quail M.A."/>
            <person name="Achtman M."/>
            <person name="Atkin R."/>
            <person name="Baker S."/>
            <person name="Basham D."/>
            <person name="Bason N."/>
            <person name="Cherevach I."/>
            <person name="Chillingworth T."/>
            <person name="Collins M."/>
            <person name="Cronin A."/>
            <person name="Davis P."/>
            <person name="Doggett J."/>
            <person name="Feltwell T."/>
            <person name="Goble A."/>
            <person name="Hamlin N."/>
            <person name="Hauser H."/>
            <person name="Holroyd S."/>
            <person name="Jagels K."/>
            <person name="Leather S."/>
            <person name="Moule S."/>
            <person name="Norberczak H."/>
            <person name="O'Neil S."/>
            <person name="Ormond D."/>
            <person name="Price C."/>
            <person name="Rabbinowitsch E."/>
            <person name="Rutter S."/>
            <person name="Sanders M."/>
            <person name="Saunders D."/>
            <person name="Seeger K."/>
            <person name="Sharp S."/>
            <person name="Simmonds M."/>
            <person name="Skelton J."/>
            <person name="Squares R."/>
            <person name="Squares S."/>
            <person name="Stevens K."/>
            <person name="Unwin L."/>
            <person name="Whitehead S."/>
            <person name="Barrell B.G."/>
            <person name="Maskell D.J."/>
        </authorList>
    </citation>
    <scope>NUCLEOTIDE SEQUENCE [LARGE SCALE GENOMIC DNA]</scope>
    <source>
        <strain>ATCC BAA-588 / NCTC 13252 / RB50</strain>
    </source>
</reference>
<organism>
    <name type="scientific">Bordetella bronchiseptica (strain ATCC BAA-588 / NCTC 13252 / RB50)</name>
    <name type="common">Alcaligenes bronchisepticus</name>
    <dbReference type="NCBI Taxonomy" id="257310"/>
    <lineage>
        <taxon>Bacteria</taxon>
        <taxon>Pseudomonadati</taxon>
        <taxon>Pseudomonadota</taxon>
        <taxon>Betaproteobacteria</taxon>
        <taxon>Burkholderiales</taxon>
        <taxon>Alcaligenaceae</taxon>
        <taxon>Bordetella</taxon>
    </lineage>
</organism>